<feature type="chain" id="PRO_0000074481" description="Pheromone-binding protein 1">
    <location>
        <begin position="1"/>
        <end position="35" status="greater than"/>
    </location>
</feature>
<feature type="non-terminal residue">
    <location>
        <position position="35"/>
    </location>
</feature>
<reference key="1">
    <citation type="journal article" date="1991" name="J. Neurobiol.">
        <title>Odorant-binding-protein subfamilies associate with distinct classes of olfactory receptor neurons in insects.</title>
        <authorList>
            <person name="Vogt R.G."/>
            <person name="Prestwich G.D."/>
            <person name="Lerner M.R."/>
        </authorList>
    </citation>
    <scope>PROTEIN SEQUENCE</scope>
</reference>
<reference key="2">
    <citation type="journal article" date="1989" name="J. Neurosci.">
        <title>Expression of pheromone binding proteins during antennal development in the gypsy moth Lymantria dispar.</title>
        <authorList>
            <person name="Vogt R.G."/>
            <person name="Koehne A.C."/>
            <person name="Dubnau J.T."/>
            <person name="Prestwich G.D."/>
        </authorList>
    </citation>
    <scope>PROTEIN SEQUENCE OF 1-30</scope>
</reference>
<protein>
    <recommendedName>
        <fullName>Pheromone-binding protein 1</fullName>
        <shortName>PBP1</shortName>
    </recommendedName>
</protein>
<dbReference type="PIR" id="A60914">
    <property type="entry name" value="A60914"/>
</dbReference>
<dbReference type="SMR" id="P34176"/>
<dbReference type="GO" id="GO:0005550">
    <property type="term" value="F:pheromone binding"/>
    <property type="evidence" value="ECO:0007669"/>
    <property type="project" value="UniProtKB-KW"/>
</dbReference>
<dbReference type="GO" id="GO:0019236">
    <property type="term" value="P:response to pheromone"/>
    <property type="evidence" value="ECO:0007669"/>
    <property type="project" value="UniProtKB-KW"/>
</dbReference>
<dbReference type="Gene3D" id="1.10.238.20">
    <property type="entry name" value="Pheromone/general odorant binding protein domain"/>
    <property type="match status" value="1"/>
</dbReference>
<dbReference type="InterPro" id="IPR006072">
    <property type="entry name" value="Odorant/phero-bd_Lep"/>
</dbReference>
<dbReference type="InterPro" id="IPR036728">
    <property type="entry name" value="PBP_GOBP_sf"/>
</dbReference>
<dbReference type="PRINTS" id="PR00484">
    <property type="entry name" value="PBPGOBP"/>
</dbReference>
<organism>
    <name type="scientific">Lymantria dispar</name>
    <name type="common">Gypsy moth</name>
    <name type="synonym">Porthetria dispar</name>
    <dbReference type="NCBI Taxonomy" id="13123"/>
    <lineage>
        <taxon>Eukaryota</taxon>
        <taxon>Metazoa</taxon>
        <taxon>Ecdysozoa</taxon>
        <taxon>Arthropoda</taxon>
        <taxon>Hexapoda</taxon>
        <taxon>Insecta</taxon>
        <taxon>Pterygota</taxon>
        <taxon>Neoptera</taxon>
        <taxon>Endopterygota</taxon>
        <taxon>Lepidoptera</taxon>
        <taxon>Glossata</taxon>
        <taxon>Ditrysia</taxon>
        <taxon>Noctuoidea</taxon>
        <taxon>Erebidae</taxon>
        <taxon>Lymantriinae</taxon>
        <taxon>Lymantria</taxon>
    </lineage>
</organism>
<sequence length="35" mass="4032">SKEVMKQMTINFAKPMEACKQELNVPDAVVQDFFN</sequence>
<keyword id="KW-0903">Direct protein sequencing</keyword>
<keyword id="KW-0589">Pheromone response</keyword>
<keyword id="KW-0590">Pheromone-binding</keyword>
<keyword id="KW-0813">Transport</keyword>
<accession>P34176</accession>
<evidence type="ECO:0000305" key="1"/>
<proteinExistence type="evidence at protein level"/>
<comment type="function">
    <text>This major soluble protein in olfactory sensilla of male moths might serve to solubilize the extremely hydrophobic pheromone molecules and to transport pheromone through the aqueous lymph to receptors located on olfactory cilia.</text>
</comment>
<comment type="subunit">
    <text evidence="1">Homodimer.</text>
</comment>
<comment type="tissue specificity">
    <text>Antenna.</text>
</comment>
<comment type="similarity">
    <text evidence="1">Belongs to the PBP/GOBP family.</text>
</comment>
<name>PBP1_LYMDI</name>